<organism>
    <name type="scientific">Lactococcus lactis subsp. lactis (strain IL1403)</name>
    <name type="common">Streptococcus lactis</name>
    <dbReference type="NCBI Taxonomy" id="272623"/>
    <lineage>
        <taxon>Bacteria</taxon>
        <taxon>Bacillati</taxon>
        <taxon>Bacillota</taxon>
        <taxon>Bacilli</taxon>
        <taxon>Lactobacillales</taxon>
        <taxon>Streptococcaceae</taxon>
        <taxon>Lactococcus</taxon>
    </lineage>
</organism>
<keyword id="KW-0067">ATP-binding</keyword>
<keyword id="KW-1003">Cell membrane</keyword>
<keyword id="KW-0472">Membrane</keyword>
<keyword id="KW-0547">Nucleotide-binding</keyword>
<keyword id="KW-0918">Phosphonate transport</keyword>
<keyword id="KW-1185">Reference proteome</keyword>
<keyword id="KW-1278">Translocase</keyword>
<keyword id="KW-0813">Transport</keyword>
<protein>
    <recommendedName>
        <fullName evidence="1">Phosphonates import ATP-binding protein PhnC</fullName>
        <ecNumber evidence="1">7.3.2.2</ecNumber>
    </recommendedName>
</protein>
<comment type="function">
    <text evidence="1">Part of the ABC transporter complex PhnCDE involved in phosphonates import. Responsible for energy coupling to the transport system.</text>
</comment>
<comment type="catalytic activity">
    <reaction evidence="1">
        <text>phosphonate(out) + ATP + H2O = phosphonate(in) + ADP + phosphate + H(+)</text>
        <dbReference type="Rhea" id="RHEA:18065"/>
        <dbReference type="ChEBI" id="CHEBI:15377"/>
        <dbReference type="ChEBI" id="CHEBI:15378"/>
        <dbReference type="ChEBI" id="CHEBI:16215"/>
        <dbReference type="ChEBI" id="CHEBI:30616"/>
        <dbReference type="ChEBI" id="CHEBI:43474"/>
        <dbReference type="ChEBI" id="CHEBI:456216"/>
        <dbReference type="EC" id="7.3.2.2"/>
    </reaction>
</comment>
<comment type="subunit">
    <text evidence="1">The complex is composed of two ATP-binding proteins (PhnC), two transmembrane proteins (PhnE) and a solute-binding protein (PhnD).</text>
</comment>
<comment type="subcellular location">
    <subcellularLocation>
        <location evidence="1">Cell membrane</location>
        <topology evidence="1">Peripheral membrane protein</topology>
    </subcellularLocation>
</comment>
<comment type="similarity">
    <text evidence="1">Belongs to the ABC transporter superfamily. Phosphonates importer (TC 3.A.1.9.1) family.</text>
</comment>
<sequence length="246" mass="27414">MIKFENVSKIYPNGTKGLTDVNLQINQGEFVAIIGTSGAGKSTLIRCVNGLNDITSGSLIVNDTEVSKLKGKELRKFRRHVGMIFQSYNLVPRVTVLKNVMFARVPDMSLFKVIFGLFSKEDKLVALDSLNKVGILDKAYIRADQLSGGQQQRVSLARALSQESEILLADEPVSALDPVTAKEVMDDFKRINEEFNKTILLNIHHVELALEYASRIIAVKKGKIVYDGPSQEVTKEILDEVYRKEA</sequence>
<gene>
    <name evidence="1" type="primary">phnC</name>
    <name type="ordered locus">LL0300</name>
    <name type="ORF">L97415</name>
</gene>
<name>PHNC_LACLA</name>
<proteinExistence type="inferred from homology"/>
<feature type="chain" id="PRO_0000092711" description="Phosphonates import ATP-binding protein PhnC">
    <location>
        <begin position="1"/>
        <end position="246"/>
    </location>
</feature>
<feature type="domain" description="ABC transporter" evidence="1">
    <location>
        <begin position="2"/>
        <end position="246"/>
    </location>
</feature>
<feature type="binding site" evidence="1">
    <location>
        <begin position="35"/>
        <end position="42"/>
    </location>
    <ligand>
        <name>ATP</name>
        <dbReference type="ChEBI" id="CHEBI:30616"/>
    </ligand>
</feature>
<dbReference type="EC" id="7.3.2.2" evidence="1"/>
<dbReference type="EMBL" id="AE005176">
    <property type="protein sequence ID" value="AAK04398.1"/>
    <property type="molecule type" value="Genomic_DNA"/>
</dbReference>
<dbReference type="PIR" id="D86662">
    <property type="entry name" value="D86662"/>
</dbReference>
<dbReference type="RefSeq" id="NP_266456.1">
    <property type="nucleotide sequence ID" value="NC_002662.1"/>
</dbReference>
<dbReference type="RefSeq" id="WP_010905272.1">
    <property type="nucleotide sequence ID" value="NC_002662.1"/>
</dbReference>
<dbReference type="SMR" id="Q9CIQ6"/>
<dbReference type="PaxDb" id="272623-L97415"/>
<dbReference type="EnsemblBacteria" id="AAK04398">
    <property type="protein sequence ID" value="AAK04398"/>
    <property type="gene ID" value="L97415"/>
</dbReference>
<dbReference type="KEGG" id="lla:L97415"/>
<dbReference type="PATRIC" id="fig|272623.7.peg.329"/>
<dbReference type="eggNOG" id="COG3638">
    <property type="taxonomic scope" value="Bacteria"/>
</dbReference>
<dbReference type="HOGENOM" id="CLU_000604_1_22_9"/>
<dbReference type="OrthoDB" id="9802264at2"/>
<dbReference type="Proteomes" id="UP000002196">
    <property type="component" value="Chromosome"/>
</dbReference>
<dbReference type="GO" id="GO:0005886">
    <property type="term" value="C:plasma membrane"/>
    <property type="evidence" value="ECO:0007669"/>
    <property type="project" value="UniProtKB-SubCell"/>
</dbReference>
<dbReference type="GO" id="GO:0015416">
    <property type="term" value="F:ABC-type phosphonate transporter activity"/>
    <property type="evidence" value="ECO:0007669"/>
    <property type="project" value="UniProtKB-EC"/>
</dbReference>
<dbReference type="GO" id="GO:0005524">
    <property type="term" value="F:ATP binding"/>
    <property type="evidence" value="ECO:0007669"/>
    <property type="project" value="UniProtKB-KW"/>
</dbReference>
<dbReference type="GO" id="GO:0016887">
    <property type="term" value="F:ATP hydrolysis activity"/>
    <property type="evidence" value="ECO:0007669"/>
    <property type="project" value="InterPro"/>
</dbReference>
<dbReference type="CDD" id="cd03256">
    <property type="entry name" value="ABC_PhnC_transporter"/>
    <property type="match status" value="1"/>
</dbReference>
<dbReference type="Gene3D" id="3.40.50.300">
    <property type="entry name" value="P-loop containing nucleotide triphosphate hydrolases"/>
    <property type="match status" value="1"/>
</dbReference>
<dbReference type="InterPro" id="IPR003593">
    <property type="entry name" value="AAA+_ATPase"/>
</dbReference>
<dbReference type="InterPro" id="IPR003439">
    <property type="entry name" value="ABC_transporter-like_ATP-bd"/>
</dbReference>
<dbReference type="InterPro" id="IPR017871">
    <property type="entry name" value="ABC_transporter-like_CS"/>
</dbReference>
<dbReference type="InterPro" id="IPR012693">
    <property type="entry name" value="ABC_transpr_PhnC"/>
</dbReference>
<dbReference type="InterPro" id="IPR050086">
    <property type="entry name" value="MetN_ABC_transporter-like"/>
</dbReference>
<dbReference type="InterPro" id="IPR027417">
    <property type="entry name" value="P-loop_NTPase"/>
</dbReference>
<dbReference type="NCBIfam" id="TIGR02315">
    <property type="entry name" value="ABC_phnC"/>
    <property type="match status" value="1"/>
</dbReference>
<dbReference type="PANTHER" id="PTHR43166">
    <property type="entry name" value="AMINO ACID IMPORT ATP-BINDING PROTEIN"/>
    <property type="match status" value="1"/>
</dbReference>
<dbReference type="PANTHER" id="PTHR43166:SF6">
    <property type="entry name" value="PHOSPHONATES IMPORT ATP-BINDING PROTEIN PHNC"/>
    <property type="match status" value="1"/>
</dbReference>
<dbReference type="Pfam" id="PF00005">
    <property type="entry name" value="ABC_tran"/>
    <property type="match status" value="1"/>
</dbReference>
<dbReference type="SMART" id="SM00382">
    <property type="entry name" value="AAA"/>
    <property type="match status" value="1"/>
</dbReference>
<dbReference type="SUPFAM" id="SSF52540">
    <property type="entry name" value="P-loop containing nucleoside triphosphate hydrolases"/>
    <property type="match status" value="1"/>
</dbReference>
<dbReference type="PROSITE" id="PS00211">
    <property type="entry name" value="ABC_TRANSPORTER_1"/>
    <property type="match status" value="1"/>
</dbReference>
<dbReference type="PROSITE" id="PS50893">
    <property type="entry name" value="ABC_TRANSPORTER_2"/>
    <property type="match status" value="1"/>
</dbReference>
<dbReference type="PROSITE" id="PS51249">
    <property type="entry name" value="PHNC"/>
    <property type="match status" value="1"/>
</dbReference>
<accession>Q9CIQ6</accession>
<reference key="1">
    <citation type="journal article" date="2001" name="Genome Res.">
        <title>The complete genome sequence of the lactic acid bacterium Lactococcus lactis ssp. lactis IL1403.</title>
        <authorList>
            <person name="Bolotin A."/>
            <person name="Wincker P."/>
            <person name="Mauger S."/>
            <person name="Jaillon O."/>
            <person name="Malarme K."/>
            <person name="Weissenbach J."/>
            <person name="Ehrlich S.D."/>
            <person name="Sorokin A."/>
        </authorList>
    </citation>
    <scope>NUCLEOTIDE SEQUENCE [LARGE SCALE GENOMIC DNA]</scope>
    <source>
        <strain>IL1403</strain>
    </source>
</reference>
<evidence type="ECO:0000255" key="1">
    <source>
        <dbReference type="HAMAP-Rule" id="MF_01713"/>
    </source>
</evidence>